<name>RISB2_BRADU</name>
<gene>
    <name evidence="1" type="primary">ribH2</name>
    <name type="ordered locus">bll7452</name>
</gene>
<reference key="1">
    <citation type="journal article" date="2002" name="DNA Res.">
        <title>Complete genomic sequence of nitrogen-fixing symbiotic bacterium Bradyrhizobium japonicum USDA110.</title>
        <authorList>
            <person name="Kaneko T."/>
            <person name="Nakamura Y."/>
            <person name="Sato S."/>
            <person name="Minamisawa K."/>
            <person name="Uchiumi T."/>
            <person name="Sasamoto S."/>
            <person name="Watanabe A."/>
            <person name="Idesawa K."/>
            <person name="Iriguchi M."/>
            <person name="Kawashima K."/>
            <person name="Kohara M."/>
            <person name="Matsumoto M."/>
            <person name="Shimpo S."/>
            <person name="Tsuruoka H."/>
            <person name="Wada T."/>
            <person name="Yamada M."/>
            <person name="Tabata S."/>
        </authorList>
    </citation>
    <scope>NUCLEOTIDE SEQUENCE [LARGE SCALE GENOMIC DNA]</scope>
    <source>
        <strain>JCM 10833 / BCRC 13528 / IAM 13628 / NBRC 14792 / USDA 110</strain>
    </source>
</reference>
<accession>Q89DI7</accession>
<organism>
    <name type="scientific">Bradyrhizobium diazoefficiens (strain JCM 10833 / BCRC 13528 / IAM 13628 / NBRC 14792 / USDA 110)</name>
    <dbReference type="NCBI Taxonomy" id="224911"/>
    <lineage>
        <taxon>Bacteria</taxon>
        <taxon>Pseudomonadati</taxon>
        <taxon>Pseudomonadota</taxon>
        <taxon>Alphaproteobacteria</taxon>
        <taxon>Hyphomicrobiales</taxon>
        <taxon>Nitrobacteraceae</taxon>
        <taxon>Bradyrhizobium</taxon>
    </lineage>
</organism>
<protein>
    <recommendedName>
        <fullName evidence="1">6,7-dimethyl-8-ribityllumazine synthase 2</fullName>
        <shortName evidence="1">DMRL synthase 2</shortName>
        <shortName evidence="1">LS 2</shortName>
        <shortName evidence="1">Lumazine synthase 2</shortName>
        <ecNumber evidence="1">2.5.1.78</ecNumber>
    </recommendedName>
</protein>
<dbReference type="EC" id="2.5.1.78" evidence="1"/>
<dbReference type="EMBL" id="BA000040">
    <property type="protein sequence ID" value="BAC52717.1"/>
    <property type="status" value="ALT_INIT"/>
    <property type="molecule type" value="Genomic_DNA"/>
</dbReference>
<dbReference type="RefSeq" id="NP_774092.1">
    <property type="nucleotide sequence ID" value="NC_004463.1"/>
</dbReference>
<dbReference type="RefSeq" id="WP_011090186.1">
    <property type="nucleotide sequence ID" value="NZ_CP011360.1"/>
</dbReference>
<dbReference type="SMR" id="Q89DI7"/>
<dbReference type="STRING" id="224911.AAV28_34945"/>
<dbReference type="EnsemblBacteria" id="BAC52717">
    <property type="protein sequence ID" value="BAC52717"/>
    <property type="gene ID" value="BAC52717"/>
</dbReference>
<dbReference type="KEGG" id="bja:bll7452"/>
<dbReference type="PATRIC" id="fig|224911.5.peg.7670"/>
<dbReference type="eggNOG" id="COG0054">
    <property type="taxonomic scope" value="Bacteria"/>
</dbReference>
<dbReference type="HOGENOM" id="CLU_089358_0_0_5"/>
<dbReference type="InParanoid" id="Q89DI7"/>
<dbReference type="OrthoDB" id="9797659at2"/>
<dbReference type="UniPathway" id="UPA00275">
    <property type="reaction ID" value="UER00404"/>
</dbReference>
<dbReference type="Proteomes" id="UP000002526">
    <property type="component" value="Chromosome"/>
</dbReference>
<dbReference type="GO" id="GO:0005737">
    <property type="term" value="C:cytoplasm"/>
    <property type="evidence" value="ECO:0000318"/>
    <property type="project" value="GO_Central"/>
</dbReference>
<dbReference type="GO" id="GO:0005829">
    <property type="term" value="C:cytosol"/>
    <property type="evidence" value="ECO:0000318"/>
    <property type="project" value="GO_Central"/>
</dbReference>
<dbReference type="GO" id="GO:0009349">
    <property type="term" value="C:riboflavin synthase complex"/>
    <property type="evidence" value="ECO:0007669"/>
    <property type="project" value="InterPro"/>
</dbReference>
<dbReference type="GO" id="GO:0000906">
    <property type="term" value="F:6,7-dimethyl-8-ribityllumazine synthase activity"/>
    <property type="evidence" value="ECO:0000318"/>
    <property type="project" value="GO_Central"/>
</dbReference>
<dbReference type="GO" id="GO:0009231">
    <property type="term" value="P:riboflavin biosynthetic process"/>
    <property type="evidence" value="ECO:0000318"/>
    <property type="project" value="GO_Central"/>
</dbReference>
<dbReference type="FunFam" id="3.40.50.960:FF:000010">
    <property type="entry name" value="6,7-dimethyl-8-ribityllumazine synthase"/>
    <property type="match status" value="1"/>
</dbReference>
<dbReference type="Gene3D" id="3.40.50.960">
    <property type="entry name" value="Lumazine/riboflavin synthase"/>
    <property type="match status" value="1"/>
</dbReference>
<dbReference type="HAMAP" id="MF_00178">
    <property type="entry name" value="Lumazine_synth"/>
    <property type="match status" value="1"/>
</dbReference>
<dbReference type="InterPro" id="IPR034964">
    <property type="entry name" value="LS"/>
</dbReference>
<dbReference type="InterPro" id="IPR002180">
    <property type="entry name" value="LS/RS"/>
</dbReference>
<dbReference type="InterPro" id="IPR036467">
    <property type="entry name" value="LS/RS_sf"/>
</dbReference>
<dbReference type="NCBIfam" id="NF009084">
    <property type="entry name" value="PRK12419.1"/>
    <property type="match status" value="1"/>
</dbReference>
<dbReference type="PANTHER" id="PTHR21058:SF0">
    <property type="entry name" value="6,7-DIMETHYL-8-RIBITYLLUMAZINE SYNTHASE"/>
    <property type="match status" value="1"/>
</dbReference>
<dbReference type="PANTHER" id="PTHR21058">
    <property type="entry name" value="6,7-DIMETHYL-8-RIBITYLLUMAZINE SYNTHASE DMRL SYNTHASE LUMAZINE SYNTHASE"/>
    <property type="match status" value="1"/>
</dbReference>
<dbReference type="Pfam" id="PF00885">
    <property type="entry name" value="DMRL_synthase"/>
    <property type="match status" value="1"/>
</dbReference>
<dbReference type="SUPFAM" id="SSF52121">
    <property type="entry name" value="Lumazine synthase"/>
    <property type="match status" value="1"/>
</dbReference>
<comment type="function">
    <text evidence="1">Catalyzes the formation of 6,7-dimethyl-8-ribityllumazine by condensation of 5-amino-6-(D-ribitylamino)uracil with 3,4-dihydroxy-2-butanone 4-phosphate. This is the penultimate step in the biosynthesis of riboflavin.</text>
</comment>
<comment type="catalytic activity">
    <reaction evidence="1">
        <text>(2S)-2-hydroxy-3-oxobutyl phosphate + 5-amino-6-(D-ribitylamino)uracil = 6,7-dimethyl-8-(1-D-ribityl)lumazine + phosphate + 2 H2O + H(+)</text>
        <dbReference type="Rhea" id="RHEA:26152"/>
        <dbReference type="ChEBI" id="CHEBI:15377"/>
        <dbReference type="ChEBI" id="CHEBI:15378"/>
        <dbReference type="ChEBI" id="CHEBI:15934"/>
        <dbReference type="ChEBI" id="CHEBI:43474"/>
        <dbReference type="ChEBI" id="CHEBI:58201"/>
        <dbReference type="ChEBI" id="CHEBI:58830"/>
        <dbReference type="EC" id="2.5.1.78"/>
    </reaction>
</comment>
<comment type="pathway">
    <text evidence="1">Cofactor biosynthesis; riboflavin biosynthesis; riboflavin from 2-hydroxy-3-oxobutyl phosphate and 5-amino-6-(D-ribitylamino)uracil: step 1/2.</text>
</comment>
<comment type="similarity">
    <text evidence="1">Belongs to the DMRL synthase family.</text>
</comment>
<comment type="sequence caution" evidence="2">
    <conflict type="erroneous initiation">
        <sequence resource="EMBL-CDS" id="BAC52717"/>
    </conflict>
</comment>
<keyword id="KW-1185">Reference proteome</keyword>
<keyword id="KW-0686">Riboflavin biosynthesis</keyword>
<keyword id="KW-0808">Transferase</keyword>
<evidence type="ECO:0000255" key="1">
    <source>
        <dbReference type="HAMAP-Rule" id="MF_00178"/>
    </source>
</evidence>
<evidence type="ECO:0000305" key="2"/>
<sequence>MDPPAIEHPRFAKPQRVAFVQACWHRDVVEEARIAFMKEAEARHLTHVDVFEVPGSFEIPLHAQILAKTRRYTAIVAAGLVVDGGIYRHEFVADTVIKALMDVQLRTEVPVFSAVLTPQQFHETEVHYDFFRRHFAIKGVEVAEACANTLLGLERLRGQVAAGIA</sequence>
<feature type="chain" id="PRO_0000134723" description="6,7-dimethyl-8-ribityllumazine synthase 2">
    <location>
        <begin position="1"/>
        <end position="165"/>
    </location>
</feature>
<feature type="active site" description="Proton donor" evidence="1">
    <location>
        <position position="88"/>
    </location>
</feature>
<feature type="binding site" evidence="1">
    <location>
        <position position="24"/>
    </location>
    <ligand>
        <name>5-amino-6-(D-ribitylamino)uracil</name>
        <dbReference type="ChEBI" id="CHEBI:15934"/>
    </ligand>
</feature>
<feature type="binding site" evidence="1">
    <location>
        <begin position="56"/>
        <end position="58"/>
    </location>
    <ligand>
        <name>5-amino-6-(D-ribitylamino)uracil</name>
        <dbReference type="ChEBI" id="CHEBI:15934"/>
    </ligand>
</feature>
<feature type="binding site" evidence="1">
    <location>
        <begin position="80"/>
        <end position="82"/>
    </location>
    <ligand>
        <name>5-amino-6-(D-ribitylamino)uracil</name>
        <dbReference type="ChEBI" id="CHEBI:15934"/>
    </ligand>
</feature>
<feature type="binding site" evidence="1">
    <location>
        <position position="113"/>
    </location>
    <ligand>
        <name>5-amino-6-(D-ribitylamino)uracil</name>
        <dbReference type="ChEBI" id="CHEBI:15934"/>
    </ligand>
</feature>
<feature type="binding site" evidence="1">
    <location>
        <position position="127"/>
    </location>
    <ligand>
        <name>(2S)-2-hydroxy-3-oxobutyl phosphate</name>
        <dbReference type="ChEBI" id="CHEBI:58830"/>
    </ligand>
</feature>
<proteinExistence type="inferred from homology"/>